<gene>
    <name evidence="1" type="primary">fucU</name>
    <name type="ordered locus">KPK_0962</name>
</gene>
<protein>
    <recommendedName>
        <fullName evidence="1">L-fucose mutarotase</fullName>
        <ecNumber evidence="1">5.1.3.29</ecNumber>
    </recommendedName>
    <alternativeName>
        <fullName evidence="1">Fucose 1-epimerase</fullName>
    </alternativeName>
    <alternativeName>
        <fullName evidence="1">Type-2 mutarotase</fullName>
    </alternativeName>
</protein>
<accession>B5XUY2</accession>
<dbReference type="EC" id="5.1.3.29" evidence="1"/>
<dbReference type="EMBL" id="CP000964">
    <property type="protein sequence ID" value="ACI11510.1"/>
    <property type="molecule type" value="Genomic_DNA"/>
</dbReference>
<dbReference type="SMR" id="B5XUY2"/>
<dbReference type="KEGG" id="kpe:KPK_0962"/>
<dbReference type="HOGENOM" id="CLU_120075_1_0_6"/>
<dbReference type="UniPathway" id="UPA00956"/>
<dbReference type="Proteomes" id="UP000001734">
    <property type="component" value="Chromosome"/>
</dbReference>
<dbReference type="GO" id="GO:0005737">
    <property type="term" value="C:cytoplasm"/>
    <property type="evidence" value="ECO:0007669"/>
    <property type="project" value="UniProtKB-SubCell"/>
</dbReference>
<dbReference type="GO" id="GO:0042806">
    <property type="term" value="F:fucose binding"/>
    <property type="evidence" value="ECO:0007669"/>
    <property type="project" value="InterPro"/>
</dbReference>
<dbReference type="GO" id="GO:0036373">
    <property type="term" value="F:L-fucose mutarotase activity"/>
    <property type="evidence" value="ECO:0007669"/>
    <property type="project" value="UniProtKB-EC"/>
</dbReference>
<dbReference type="GO" id="GO:0036065">
    <property type="term" value="P:fucosylation"/>
    <property type="evidence" value="ECO:0007669"/>
    <property type="project" value="TreeGrafter"/>
</dbReference>
<dbReference type="GO" id="GO:0042354">
    <property type="term" value="P:L-fucose metabolic process"/>
    <property type="evidence" value="ECO:0007669"/>
    <property type="project" value="UniProtKB-UniRule"/>
</dbReference>
<dbReference type="FunFam" id="3.40.1650.10:FF:000001">
    <property type="entry name" value="L-fucose mutarotase"/>
    <property type="match status" value="1"/>
</dbReference>
<dbReference type="Gene3D" id="3.40.1650.10">
    <property type="entry name" value="RbsD-like domain"/>
    <property type="match status" value="1"/>
</dbReference>
<dbReference type="HAMAP" id="MF_01662">
    <property type="entry name" value="L_fucose_rotase"/>
    <property type="match status" value="1"/>
</dbReference>
<dbReference type="InterPro" id="IPR023751">
    <property type="entry name" value="L-fucose_mutarotase"/>
</dbReference>
<dbReference type="InterPro" id="IPR023750">
    <property type="entry name" value="RbsD-like_sf"/>
</dbReference>
<dbReference type="InterPro" id="IPR050443">
    <property type="entry name" value="RbsD/FucU_mutarotase"/>
</dbReference>
<dbReference type="InterPro" id="IPR007721">
    <property type="entry name" value="RbsD_FucU"/>
</dbReference>
<dbReference type="NCBIfam" id="NF011949">
    <property type="entry name" value="PRK15420.1"/>
    <property type="match status" value="1"/>
</dbReference>
<dbReference type="PANTHER" id="PTHR31690">
    <property type="entry name" value="FUCOSE MUTAROTASE"/>
    <property type="match status" value="1"/>
</dbReference>
<dbReference type="PANTHER" id="PTHR31690:SF4">
    <property type="entry name" value="FUCOSE MUTAROTASE"/>
    <property type="match status" value="1"/>
</dbReference>
<dbReference type="Pfam" id="PF05025">
    <property type="entry name" value="RbsD_FucU"/>
    <property type="match status" value="1"/>
</dbReference>
<dbReference type="SUPFAM" id="SSF102546">
    <property type="entry name" value="RbsD-like"/>
    <property type="match status" value="1"/>
</dbReference>
<name>FUCM_KLEP3</name>
<reference key="1">
    <citation type="journal article" date="2008" name="PLoS Genet.">
        <title>Complete genome sequence of the N2-fixing broad host range endophyte Klebsiella pneumoniae 342 and virulence predictions verified in mice.</title>
        <authorList>
            <person name="Fouts D.E."/>
            <person name="Tyler H.L."/>
            <person name="DeBoy R.T."/>
            <person name="Daugherty S."/>
            <person name="Ren Q."/>
            <person name="Badger J.H."/>
            <person name="Durkin A.S."/>
            <person name="Huot H."/>
            <person name="Shrivastava S."/>
            <person name="Kothari S."/>
            <person name="Dodson R.J."/>
            <person name="Mohamoud Y."/>
            <person name="Khouri H."/>
            <person name="Roesch L.F.W."/>
            <person name="Krogfelt K.A."/>
            <person name="Struve C."/>
            <person name="Triplett E.W."/>
            <person name="Methe B.A."/>
        </authorList>
    </citation>
    <scope>NUCLEOTIDE SEQUENCE [LARGE SCALE GENOMIC DNA]</scope>
    <source>
        <strain>342</strain>
    </source>
</reference>
<proteinExistence type="inferred from homology"/>
<evidence type="ECO:0000255" key="1">
    <source>
        <dbReference type="HAMAP-Rule" id="MF_01662"/>
    </source>
</evidence>
<comment type="function">
    <text evidence="1">Involved in the anomeric conversion of L-fucose.</text>
</comment>
<comment type="catalytic activity">
    <reaction evidence="1">
        <text>alpha-L-fucose = beta-L-fucose</text>
        <dbReference type="Rhea" id="RHEA:25580"/>
        <dbReference type="ChEBI" id="CHEBI:42548"/>
        <dbReference type="ChEBI" id="CHEBI:42589"/>
        <dbReference type="EC" id="5.1.3.29"/>
    </reaction>
</comment>
<comment type="pathway">
    <text evidence="1">Carbohydrate metabolism; L-fucose metabolism.</text>
</comment>
<comment type="subunit">
    <text evidence="1">Homodecamer.</text>
</comment>
<comment type="subcellular location">
    <subcellularLocation>
        <location evidence="1">Cytoplasm</location>
    </subcellularLocation>
</comment>
<comment type="similarity">
    <text evidence="1">Belongs to the RbsD / FucU family. FucU mutarotase subfamily.</text>
</comment>
<feature type="chain" id="PRO_1000187187" description="L-fucose mutarotase">
    <location>
        <begin position="1"/>
        <end position="140"/>
    </location>
</feature>
<feature type="active site" description="Proton donor" evidence="1">
    <location>
        <position position="22"/>
    </location>
</feature>
<feature type="binding site" evidence="1">
    <location>
        <position position="30"/>
    </location>
    <ligand>
        <name>substrate</name>
    </ligand>
</feature>
<feature type="binding site" evidence="1">
    <location>
        <position position="107"/>
    </location>
    <ligand>
        <name>substrate</name>
    </ligand>
</feature>
<feature type="binding site" evidence="1">
    <location>
        <begin position="129"/>
        <end position="131"/>
    </location>
    <ligand>
        <name>substrate</name>
    </ligand>
</feature>
<organism>
    <name type="scientific">Klebsiella pneumoniae (strain 342)</name>
    <dbReference type="NCBI Taxonomy" id="507522"/>
    <lineage>
        <taxon>Bacteria</taxon>
        <taxon>Pseudomonadati</taxon>
        <taxon>Pseudomonadota</taxon>
        <taxon>Gammaproteobacteria</taxon>
        <taxon>Enterobacterales</taxon>
        <taxon>Enterobacteriaceae</taxon>
        <taxon>Klebsiella/Raoultella group</taxon>
        <taxon>Klebsiella</taxon>
        <taxon>Klebsiella pneumoniae complex</taxon>
    </lineage>
</organism>
<keyword id="KW-0119">Carbohydrate metabolism</keyword>
<keyword id="KW-0963">Cytoplasm</keyword>
<keyword id="KW-0294">Fucose metabolism</keyword>
<keyword id="KW-0413">Isomerase</keyword>
<sequence length="140" mass="15322">MLKTISPLISPELLKVLAEMGHGDEIIFSDAHFPAHSMGPQVIRADGLRVSDLLQAIIPLFELDSYAPPLVMMAAVEGDALDPTVEQCYRQALSAQAPCPDIVRIDRFAFYDRAQKAFAIVITGERAKYGNILLKKGVTP</sequence>